<organism>
    <name type="scientific">Olea europaea</name>
    <name type="common">Common olive</name>
    <dbReference type="NCBI Taxonomy" id="4146"/>
    <lineage>
        <taxon>Eukaryota</taxon>
        <taxon>Viridiplantae</taxon>
        <taxon>Streptophyta</taxon>
        <taxon>Embryophyta</taxon>
        <taxon>Tracheophyta</taxon>
        <taxon>Spermatophyta</taxon>
        <taxon>Magnoliopsida</taxon>
        <taxon>eudicotyledons</taxon>
        <taxon>Gunneridae</taxon>
        <taxon>Pentapetalae</taxon>
        <taxon>asterids</taxon>
        <taxon>lamiids</taxon>
        <taxon>Lamiales</taxon>
        <taxon>Oleaceae</taxon>
        <taxon>Oleeae</taxon>
        <taxon>Olea</taxon>
    </lineage>
</organism>
<protein>
    <recommendedName>
        <fullName>Profilin-1</fullName>
    </recommendedName>
    <alternativeName>
        <fullName>Pollen allergen Ole e 2</fullName>
    </alternativeName>
    <allergenName>Ole e 2</allergenName>
</protein>
<comment type="function">
    <text evidence="1">Binds to actin and affects the structure of the cytoskeleton. At high concentrations, profilin prevents the polymerization of actin, whereas it enhances it at low concentrations (By similarity).</text>
</comment>
<comment type="subunit">
    <text evidence="1">Occurs in many kinds of cells as a complex with monomeric actin in a 1:1 ratio.</text>
</comment>
<comment type="subcellular location">
    <subcellularLocation>
        <location evidence="1">Cytoplasm</location>
        <location evidence="1">Cytoskeleton</location>
    </subcellularLocation>
</comment>
<comment type="PTM">
    <text evidence="1">Phosphorylated by MAP kinases.</text>
</comment>
<comment type="polymorphism">
    <text>Several isoforms of the allergen exist due to polymorphism.</text>
</comment>
<comment type="allergen">
    <text>Causes an allergic reaction in human.</text>
</comment>
<comment type="miscellaneous">
    <text evidence="3">The variability of the residues taking part of IgE-binding epitopes might be responsible of the difference in cross-reactivity among olive pollen cultivars, and between distantly related pollen species, leading to a variable range of allergy reactions among atopic patients.</text>
</comment>
<comment type="similarity">
    <text evidence="2">Belongs to the profilin family.</text>
</comment>
<evidence type="ECO:0000250" key="1"/>
<evidence type="ECO:0000305" key="2"/>
<evidence type="ECO:0000305" key="3">
    <source>
    </source>
</evidence>
<keyword id="KW-0009">Actin-binding</keyword>
<keyword id="KW-0020">Allergen</keyword>
<keyword id="KW-0963">Cytoplasm</keyword>
<keyword id="KW-0206">Cytoskeleton</keyword>
<keyword id="KW-1015">Disulfide bond</keyword>
<keyword id="KW-0597">Phosphoprotein</keyword>
<feature type="initiator methionine" description="Removed" evidence="1">
    <location>
        <position position="1"/>
    </location>
</feature>
<feature type="chain" id="PRO_0000424991" description="Profilin-1">
    <location>
        <begin position="2"/>
        <end position="134"/>
    </location>
</feature>
<feature type="short sequence motif" description="Involved in PIP2 interaction">
    <location>
        <begin position="84"/>
        <end position="100"/>
    </location>
</feature>
<feature type="modified residue" description="Phosphothreonine" evidence="1">
    <location>
        <position position="114"/>
    </location>
</feature>
<feature type="disulfide bond" evidence="3">
    <location>
        <begin position="13"/>
        <end position="118"/>
    </location>
</feature>
<name>PROFZ_OLEEU</name>
<sequence>MSWQAYVDDHLMCDIEGHEGHRLTAAAIVGHDGSVWAQSATFPQFKPEEMNGIMTDFNEPGHLAPTGLHLGGTKYMVIQGEAGAVIRGKKGSGGITIKKTGQALVCGIYEEPVTPGQCNMVVERLEDYLLEQGL</sequence>
<proteinExistence type="evidence at protein level"/>
<dbReference type="EMBL" id="DQ117907">
    <property type="protein sequence ID" value="AAZ30397.1"/>
    <property type="molecule type" value="mRNA"/>
</dbReference>
<dbReference type="SMR" id="A4GD55"/>
<dbReference type="Allergome" id="490">
    <property type="allergen name" value="Ole e 2"/>
</dbReference>
<dbReference type="GO" id="GO:0005938">
    <property type="term" value="C:cell cortex"/>
    <property type="evidence" value="ECO:0007669"/>
    <property type="project" value="TreeGrafter"/>
</dbReference>
<dbReference type="GO" id="GO:0005856">
    <property type="term" value="C:cytoskeleton"/>
    <property type="evidence" value="ECO:0007669"/>
    <property type="project" value="UniProtKB-SubCell"/>
</dbReference>
<dbReference type="GO" id="GO:0003785">
    <property type="term" value="F:actin monomer binding"/>
    <property type="evidence" value="ECO:0007669"/>
    <property type="project" value="TreeGrafter"/>
</dbReference>
<dbReference type="CDD" id="cd00148">
    <property type="entry name" value="PROF"/>
    <property type="match status" value="1"/>
</dbReference>
<dbReference type="FunFam" id="3.30.450.30:FF:000001">
    <property type="entry name" value="Profilin"/>
    <property type="match status" value="1"/>
</dbReference>
<dbReference type="Gene3D" id="3.30.450.30">
    <property type="entry name" value="Dynein light chain 2a, cytoplasmic"/>
    <property type="match status" value="1"/>
</dbReference>
<dbReference type="InterPro" id="IPR048278">
    <property type="entry name" value="PFN"/>
</dbReference>
<dbReference type="InterPro" id="IPR005455">
    <property type="entry name" value="PFN_euk"/>
</dbReference>
<dbReference type="InterPro" id="IPR036140">
    <property type="entry name" value="PFN_sf"/>
</dbReference>
<dbReference type="InterPro" id="IPR027310">
    <property type="entry name" value="Profilin_CS"/>
</dbReference>
<dbReference type="PANTHER" id="PTHR11604">
    <property type="entry name" value="PROFILIN"/>
    <property type="match status" value="1"/>
</dbReference>
<dbReference type="PANTHER" id="PTHR11604:SF25">
    <property type="entry name" value="PROFILIN-5"/>
    <property type="match status" value="1"/>
</dbReference>
<dbReference type="Pfam" id="PF00235">
    <property type="entry name" value="Profilin"/>
    <property type="match status" value="1"/>
</dbReference>
<dbReference type="PRINTS" id="PR00392">
    <property type="entry name" value="PROFILIN"/>
</dbReference>
<dbReference type="PRINTS" id="PR01640">
    <property type="entry name" value="PROFILINPLNT"/>
</dbReference>
<dbReference type="SMART" id="SM00392">
    <property type="entry name" value="PROF"/>
    <property type="match status" value="1"/>
</dbReference>
<dbReference type="SUPFAM" id="SSF55770">
    <property type="entry name" value="Profilin (actin-binding protein)"/>
    <property type="match status" value="1"/>
</dbReference>
<dbReference type="PROSITE" id="PS00414">
    <property type="entry name" value="PROFILIN"/>
    <property type="match status" value="1"/>
</dbReference>
<accession>A4GD55</accession>
<reference key="1">
    <citation type="journal article" date="2012" name="PLoS ONE">
        <title>Characterization of profilin polymorphism in pollen with a focus on multifunctionality.</title>
        <authorList>
            <person name="Jimenez-Lopez J.C."/>
            <person name="Morales S."/>
            <person name="Castro A.J."/>
            <person name="Volkmann D."/>
            <person name="Rodriguez-Garcia M.I."/>
            <person name="Alche Jde D."/>
        </authorList>
    </citation>
    <scope>NUCLEOTIDE SEQUENCE [MRNA]</scope>
    <scope>POLYMORPHISM</scope>
    <source>
        <strain>cv. Picudo</strain>
    </source>
</reference>
<reference key="2">
    <citation type="journal article" date="2013" name="PLoS ONE">
        <title>Analysis of the effects of polymorphism on pollen profilin structural functionality and the generation of conformational, T- and B-cell epitopes.</title>
        <authorList>
            <person name="Jimenez-Lopez J.C."/>
            <person name="Rodriguez-Garcia M.I."/>
            <person name="Alche J.D."/>
        </authorList>
    </citation>
    <scope>3D-STRUCTURE MODELING</scope>
    <scope>DISULFIDE BOND</scope>
</reference>